<name>CTSRB_HUMAN</name>
<keyword id="KW-0025">Alternative splicing</keyword>
<keyword id="KW-1003">Cell membrane</keyword>
<keyword id="KW-0966">Cell projection</keyword>
<keyword id="KW-0969">Cilium</keyword>
<keyword id="KW-0217">Developmental protein</keyword>
<keyword id="KW-0221">Differentiation</keyword>
<keyword id="KW-1015">Disulfide bond</keyword>
<keyword id="KW-0282">Flagellum</keyword>
<keyword id="KW-0325">Glycoprotein</keyword>
<keyword id="KW-0472">Membrane</keyword>
<keyword id="KW-1267">Proteomics identification</keyword>
<keyword id="KW-1185">Reference proteome</keyword>
<keyword id="KW-0744">Spermatogenesis</keyword>
<keyword id="KW-0812">Transmembrane</keyword>
<keyword id="KW-1133">Transmembrane helix</keyword>
<sequence length="1116" mass="126924">MESPLIYVSVLLLNIFEFSSGIVYNKDDTEKRFACSNKGFPQENEIIKLYLFLENLKIQCFFQTENEIASKAMLSVFTSGGLAPSLGIMNSTYNGIFHFNLTLFSDRILWLVDIPRENITQSTDIAAVEEWLVRITLHHGLNIYATEGTLLDVIREPILQWTPGDVIPESEISKLYPHVVDLKVTKCPCANDVALLGFIVDTIVDGVYIGITFGGFWHDYDTTWFNMTQTIYSQLQEEYEDLSLVDMVLTNHFLVILTSLGLFVSEDLRYPSRHSLSFSRADFCGFERVDYVKGKLWYNERCFANREHFEVDYVTVTFERNRTLSESSSCFYSQEPFLEWVPCLPHIFKGIKIFPTVLTFLVDQERGTGVYLFYNKVRKTAIASVSTLRNNEPNSQSKFPIFRFPSSFSSPVGMVFHPRSHFLYAYGNQIWLSVDGGNTFQLIANFHDDIIKKTFHSFYTSAITFVSQRGKVYSTKAGMGRYSAVGSVTERIFTLYYDHLGFLHKLTLGRFEASGPPTAFGNSRNLFGQPPDMGFETALAPQHTSLDEIIFFAYVPENEPQETIYSKKFGNIHYGKVIHSGKTGRAYIRKVLQHTTPKGFLSSVIAEMKEPFGLEEVNESSCLSSSLLINKAGNVYKLTLDSQVVQALFEDTDIEKTVVLPGYSSFLITSILDNKNALAIATMPESAPNNMTFLKSTWFLYNFGQRNGRTWKIYSKPCNYWFQHDDSPSLNIVKYIDLGNSYVLKAKVIRNAKGFRMLEIPLLTVFVGNPNLLEVTAEVTFDDTDSYVITISAASKVLHQGSTSLAFIMWSASTECFVTTMVPTLKSSCSYLRSMHHIPSKFIPFEDWISGVHKDSQGFNLIKTLPINYRPPSNMGIAIPLTDNFYHADPSKPIPRNMFHMSKKTGKFKQCANVSTREECNCTKDQKFSHAVAFSDCREKVPRFKFPITQYPVSLEIINEDGRVPLQSPYLVTVTEVNMRHNWKLKHTVPENIKRMKQLVEPILGAAVYNPSGLNLSIKGSELFHFRVTVISGVTFCNLIEEFQIYVDEAPLPFPGHTLIAVATAVVLGGLIFIAFMFQLQGIHPWRTFQRWIRRNQEKFSSISLSELIHRSKSEE</sequence>
<evidence type="ECO:0000250" key="1">
    <source>
        <dbReference type="UniProtKB" id="A2RTF1"/>
    </source>
</evidence>
<evidence type="ECO:0000255" key="2"/>
<evidence type="ECO:0000303" key="3">
    <source>
    </source>
</evidence>
<evidence type="ECO:0000305" key="4"/>
<evidence type="ECO:0000312" key="5">
    <source>
        <dbReference type="HGNC" id="HGNC:20500"/>
    </source>
</evidence>
<comment type="function">
    <text evidence="1">Auxiliary component of the CatSper complex, a complex involved in sperm cell hyperactivation. Sperm cell hyperactivation is needed for sperm motility which is essential late in the preparation of sperm for fertilization.</text>
</comment>
<comment type="subunit">
    <text evidence="1">Component of the CatSper complex or CatSpermasome composed of the core pore-forming members CATSPER1, CATSPER2, CATSPER3 and CATSPER4 as well as auxiliary members CATSPERB, CATSPERG, CATSPERD, CATSPERE, CATSPERZ, C2CD6/CATSPERT, TMEM249, TMEM262 and EFCAB9. HSPA1 may be an additional auxiliary complex member. The core complex members CATSPER1, CATSPER2, CATSPER3 and CATSPER4 form a heterotetrameric channel. The auxiliary CATSPERB, CATSPERG, CATSPERD and CATSPERE subunits form a pavilion-like structure over the pore which stabilizes the complex through interactions with CATSPER4, CATSPER3, CATSPER1 and CATSPER2 respectively. TMEM262/CATSPERH interacts with CATSPERB, further stabilizing the complex. C2CD6/CATSPERT interacts at least with CATSPERD and is required for targeting the CatSper complex in the flagellar membrane.</text>
</comment>
<comment type="subcellular location">
    <subcellularLocation>
        <location evidence="1">Cell projection</location>
        <location evidence="1">Cilium</location>
        <location evidence="1">Flagellum membrane</location>
        <topology evidence="1">Single-pass membrane protein</topology>
    </subcellularLocation>
    <text evidence="1">Predominantly located in the principal piece of the sperm tail.</text>
</comment>
<comment type="alternative products">
    <event type="alternative splicing"/>
    <isoform>
        <id>Q9H7T0-1</id>
        <name>1</name>
        <sequence type="displayed"/>
    </isoform>
    <isoform>
        <id>Q9H7T0-2</id>
        <name>2</name>
        <sequence type="described" ref="VSP_027008"/>
    </isoform>
</comment>
<comment type="caution">
    <text evidence="4">In mouse, Slco6c1 is an additional auxiliary subunit of the CatSper complex. It is unclear if the related SLCO6A1 protein performs the same role in non-rodent species.</text>
</comment>
<proteinExistence type="evidence at protein level"/>
<accession>Q9H7T0</accession>
<accession>A0AV51</accession>
<reference key="1">
    <citation type="journal article" date="2004" name="Nat. Genet.">
        <title>Complete sequencing and characterization of 21,243 full-length human cDNAs.</title>
        <authorList>
            <person name="Ota T."/>
            <person name="Suzuki Y."/>
            <person name="Nishikawa T."/>
            <person name="Otsuki T."/>
            <person name="Sugiyama T."/>
            <person name="Irie R."/>
            <person name="Wakamatsu A."/>
            <person name="Hayashi K."/>
            <person name="Sato H."/>
            <person name="Nagai K."/>
            <person name="Kimura K."/>
            <person name="Makita H."/>
            <person name="Sekine M."/>
            <person name="Obayashi M."/>
            <person name="Nishi T."/>
            <person name="Shibahara T."/>
            <person name="Tanaka T."/>
            <person name="Ishii S."/>
            <person name="Yamamoto J."/>
            <person name="Saito K."/>
            <person name="Kawai Y."/>
            <person name="Isono Y."/>
            <person name="Nakamura Y."/>
            <person name="Nagahari K."/>
            <person name="Murakami K."/>
            <person name="Yasuda T."/>
            <person name="Iwayanagi T."/>
            <person name="Wagatsuma M."/>
            <person name="Shiratori A."/>
            <person name="Sudo H."/>
            <person name="Hosoiri T."/>
            <person name="Kaku Y."/>
            <person name="Kodaira H."/>
            <person name="Kondo H."/>
            <person name="Sugawara M."/>
            <person name="Takahashi M."/>
            <person name="Kanda K."/>
            <person name="Yokoi T."/>
            <person name="Furuya T."/>
            <person name="Kikkawa E."/>
            <person name="Omura Y."/>
            <person name="Abe K."/>
            <person name="Kamihara K."/>
            <person name="Katsuta N."/>
            <person name="Sato K."/>
            <person name="Tanikawa M."/>
            <person name="Yamazaki M."/>
            <person name="Ninomiya K."/>
            <person name="Ishibashi T."/>
            <person name="Yamashita H."/>
            <person name="Murakawa K."/>
            <person name="Fujimori K."/>
            <person name="Tanai H."/>
            <person name="Kimata M."/>
            <person name="Watanabe M."/>
            <person name="Hiraoka S."/>
            <person name="Chiba Y."/>
            <person name="Ishida S."/>
            <person name="Ono Y."/>
            <person name="Takiguchi S."/>
            <person name="Watanabe S."/>
            <person name="Yosida M."/>
            <person name="Hotuta T."/>
            <person name="Kusano J."/>
            <person name="Kanehori K."/>
            <person name="Takahashi-Fujii A."/>
            <person name="Hara H."/>
            <person name="Tanase T.-O."/>
            <person name="Nomura Y."/>
            <person name="Togiya S."/>
            <person name="Komai F."/>
            <person name="Hara R."/>
            <person name="Takeuchi K."/>
            <person name="Arita M."/>
            <person name="Imose N."/>
            <person name="Musashino K."/>
            <person name="Yuuki H."/>
            <person name="Oshima A."/>
            <person name="Sasaki N."/>
            <person name="Aotsuka S."/>
            <person name="Yoshikawa Y."/>
            <person name="Matsunawa H."/>
            <person name="Ichihara T."/>
            <person name="Shiohata N."/>
            <person name="Sano S."/>
            <person name="Moriya S."/>
            <person name="Momiyama H."/>
            <person name="Satoh N."/>
            <person name="Takami S."/>
            <person name="Terashima Y."/>
            <person name="Suzuki O."/>
            <person name="Nakagawa S."/>
            <person name="Senoh A."/>
            <person name="Mizoguchi H."/>
            <person name="Goto Y."/>
            <person name="Shimizu F."/>
            <person name="Wakebe H."/>
            <person name="Hishigaki H."/>
            <person name="Watanabe T."/>
            <person name="Sugiyama A."/>
            <person name="Takemoto M."/>
            <person name="Kawakami B."/>
            <person name="Yamazaki M."/>
            <person name="Watanabe K."/>
            <person name="Kumagai A."/>
            <person name="Itakura S."/>
            <person name="Fukuzumi Y."/>
            <person name="Fujimori Y."/>
            <person name="Komiyama M."/>
            <person name="Tashiro H."/>
            <person name="Tanigami A."/>
            <person name="Fujiwara T."/>
            <person name="Ono T."/>
            <person name="Yamada K."/>
            <person name="Fujii Y."/>
            <person name="Ozaki K."/>
            <person name="Hirao M."/>
            <person name="Ohmori Y."/>
            <person name="Kawabata A."/>
            <person name="Hikiji T."/>
            <person name="Kobatake N."/>
            <person name="Inagaki H."/>
            <person name="Ikema Y."/>
            <person name="Okamoto S."/>
            <person name="Okitani R."/>
            <person name="Kawakami T."/>
            <person name="Noguchi S."/>
            <person name="Itoh T."/>
            <person name="Shigeta K."/>
            <person name="Senba T."/>
            <person name="Matsumura K."/>
            <person name="Nakajima Y."/>
            <person name="Mizuno T."/>
            <person name="Morinaga M."/>
            <person name="Sasaki M."/>
            <person name="Togashi T."/>
            <person name="Oyama M."/>
            <person name="Hata H."/>
            <person name="Watanabe M."/>
            <person name="Komatsu T."/>
            <person name="Mizushima-Sugano J."/>
            <person name="Satoh T."/>
            <person name="Shirai Y."/>
            <person name="Takahashi Y."/>
            <person name="Nakagawa K."/>
            <person name="Okumura K."/>
            <person name="Nagase T."/>
            <person name="Nomura N."/>
            <person name="Kikuchi H."/>
            <person name="Masuho Y."/>
            <person name="Yamashita R."/>
            <person name="Nakai K."/>
            <person name="Yada T."/>
            <person name="Nakamura Y."/>
            <person name="Ohara O."/>
            <person name="Isogai T."/>
            <person name="Sugano S."/>
        </authorList>
    </citation>
    <scope>NUCLEOTIDE SEQUENCE [LARGE SCALE MRNA] (ISOFORM 2)</scope>
    <source>
        <tissue>Placenta</tissue>
    </source>
</reference>
<reference key="2">
    <citation type="journal article" date="2004" name="Genome Res.">
        <title>The status, quality, and expansion of the NIH full-length cDNA project: the Mammalian Gene Collection (MGC).</title>
        <authorList>
            <consortium name="The MGC Project Team"/>
        </authorList>
    </citation>
    <scope>NUCLEOTIDE SEQUENCE [LARGE SCALE MRNA] (ISOFORM 1)</scope>
</reference>
<protein>
    <recommendedName>
        <fullName evidence="5">Cation channel sperm-associated auxiliary subunit beta</fullName>
        <shortName>CatSper-beta</shortName>
    </recommendedName>
</protein>
<dbReference type="EMBL" id="AK024360">
    <property type="protein sequence ID" value="BAB14896.1"/>
    <property type="molecule type" value="mRNA"/>
</dbReference>
<dbReference type="EMBL" id="BC126214">
    <property type="protein sequence ID" value="AAI26215.1"/>
    <property type="molecule type" value="mRNA"/>
</dbReference>
<dbReference type="EMBL" id="BC126216">
    <property type="protein sequence ID" value="AAI26217.1"/>
    <property type="molecule type" value="mRNA"/>
</dbReference>
<dbReference type="CCDS" id="CCDS32142.1">
    <molecule id="Q9H7T0-1"/>
</dbReference>
<dbReference type="RefSeq" id="NP_079040.2">
    <molecule id="Q9H7T0-1"/>
    <property type="nucleotide sequence ID" value="NM_024764.4"/>
</dbReference>
<dbReference type="SMR" id="Q9H7T0"/>
<dbReference type="BioGRID" id="122915">
    <property type="interactions" value="1"/>
</dbReference>
<dbReference type="ComplexPortal" id="CPX-9165">
    <property type="entry name" value="CatSpermasome complex"/>
</dbReference>
<dbReference type="FunCoup" id="Q9H7T0">
    <property type="interactions" value="10"/>
</dbReference>
<dbReference type="STRING" id="9606.ENSP00000256343"/>
<dbReference type="TCDB" id="1.A.1.19.1">
    <property type="family name" value="the voltage-gated ion channel (vic) superfamily"/>
</dbReference>
<dbReference type="GlyCosmos" id="Q9H7T0">
    <property type="glycosylation" value="11 sites, No reported glycans"/>
</dbReference>
<dbReference type="GlyGen" id="Q9H7T0">
    <property type="glycosylation" value="11 sites"/>
</dbReference>
<dbReference type="iPTMnet" id="Q9H7T0"/>
<dbReference type="PhosphoSitePlus" id="Q9H7T0"/>
<dbReference type="BioMuta" id="CATSPERB"/>
<dbReference type="DMDM" id="158519875"/>
<dbReference type="jPOST" id="Q9H7T0"/>
<dbReference type="MassIVE" id="Q9H7T0"/>
<dbReference type="PaxDb" id="9606-ENSP00000256343"/>
<dbReference type="PeptideAtlas" id="Q9H7T0"/>
<dbReference type="ProteomicsDB" id="81144">
    <molecule id="Q9H7T0-1"/>
</dbReference>
<dbReference type="ProteomicsDB" id="81145">
    <molecule id="Q9H7T0-2"/>
</dbReference>
<dbReference type="Antibodypedia" id="49510">
    <property type="antibodies" value="38 antibodies from 15 providers"/>
</dbReference>
<dbReference type="DNASU" id="79820"/>
<dbReference type="Ensembl" id="ENST00000256343.8">
    <molecule id="Q9H7T0-1"/>
    <property type="protein sequence ID" value="ENSP00000256343.3"/>
    <property type="gene ID" value="ENSG00000133962.8"/>
</dbReference>
<dbReference type="Ensembl" id="ENST00000619027.2">
    <molecule id="Q9H7T0-1"/>
    <property type="protein sequence ID" value="ENSP00000478546.1"/>
    <property type="gene ID" value="ENSG00000274338.2"/>
</dbReference>
<dbReference type="GeneID" id="79820"/>
<dbReference type="KEGG" id="hsa:79820"/>
<dbReference type="MANE-Select" id="ENST00000256343.8">
    <property type="protein sequence ID" value="ENSP00000256343.3"/>
    <property type="RefSeq nucleotide sequence ID" value="NM_024764.4"/>
    <property type="RefSeq protein sequence ID" value="NP_079040.2"/>
</dbReference>
<dbReference type="UCSC" id="uc001xzs.2">
    <molecule id="Q9H7T0-1"/>
    <property type="organism name" value="human"/>
</dbReference>
<dbReference type="AGR" id="HGNC:20500"/>
<dbReference type="CTD" id="79820"/>
<dbReference type="DisGeNET" id="79820"/>
<dbReference type="GeneCards" id="CATSPERB"/>
<dbReference type="HGNC" id="HGNC:20500">
    <property type="gene designation" value="CATSPERB"/>
</dbReference>
<dbReference type="HPA" id="ENSG00000133962">
    <property type="expression patterns" value="Tissue enriched (pancreas)"/>
</dbReference>
<dbReference type="MalaCards" id="CATSPERB"/>
<dbReference type="MIM" id="611169">
    <property type="type" value="gene"/>
</dbReference>
<dbReference type="neXtProt" id="NX_Q9H7T0"/>
<dbReference type="OpenTargets" id="ENSG00000133962"/>
<dbReference type="PharmGKB" id="PA162381112"/>
<dbReference type="VEuPathDB" id="HostDB:ENSG00000133962"/>
<dbReference type="eggNOG" id="ENOG502QZ5S">
    <property type="taxonomic scope" value="Eukaryota"/>
</dbReference>
<dbReference type="GeneTree" id="ENSGT00390000008198"/>
<dbReference type="HOGENOM" id="CLU_012454_0_0_1"/>
<dbReference type="InParanoid" id="Q9H7T0"/>
<dbReference type="OMA" id="KEPFLEW"/>
<dbReference type="OrthoDB" id="2159869at2759"/>
<dbReference type="PAN-GO" id="Q9H7T0">
    <property type="GO annotations" value="2 GO annotations based on evolutionary models"/>
</dbReference>
<dbReference type="PhylomeDB" id="Q9H7T0"/>
<dbReference type="TreeFam" id="TF328432"/>
<dbReference type="PathwayCommons" id="Q9H7T0"/>
<dbReference type="Reactome" id="R-HSA-1300642">
    <property type="pathway name" value="Sperm Motility And Taxes"/>
</dbReference>
<dbReference type="BioGRID-ORCS" id="79820">
    <property type="hits" value="13 hits in 1151 CRISPR screens"/>
</dbReference>
<dbReference type="ChiTaRS" id="CATSPERB">
    <property type="organism name" value="human"/>
</dbReference>
<dbReference type="GenomeRNAi" id="79820"/>
<dbReference type="Pharos" id="Q9H7T0">
    <property type="development level" value="Tdark"/>
</dbReference>
<dbReference type="PRO" id="PR:Q9H7T0"/>
<dbReference type="Proteomes" id="UP000005640">
    <property type="component" value="Chromosome 14"/>
</dbReference>
<dbReference type="RNAct" id="Q9H7T0">
    <property type="molecule type" value="protein"/>
</dbReference>
<dbReference type="Bgee" id="ENSG00000133962">
    <property type="expression patterns" value="Expressed in body of pancreas and 87 other cell types or tissues"/>
</dbReference>
<dbReference type="ExpressionAtlas" id="Q9H7T0">
    <property type="expression patterns" value="baseline and differential"/>
</dbReference>
<dbReference type="GO" id="GO:0036128">
    <property type="term" value="C:CatSper complex"/>
    <property type="evidence" value="ECO:0000250"/>
    <property type="project" value="UniProtKB"/>
</dbReference>
<dbReference type="GO" id="GO:0005929">
    <property type="term" value="C:cilium"/>
    <property type="evidence" value="ECO:0000318"/>
    <property type="project" value="GO_Central"/>
</dbReference>
<dbReference type="GO" id="GO:0005886">
    <property type="term" value="C:plasma membrane"/>
    <property type="evidence" value="ECO:0000304"/>
    <property type="project" value="Reactome"/>
</dbReference>
<dbReference type="GO" id="GO:0097228">
    <property type="term" value="C:sperm principal piece"/>
    <property type="evidence" value="ECO:0000250"/>
    <property type="project" value="UniProtKB"/>
</dbReference>
<dbReference type="GO" id="GO:0030154">
    <property type="term" value="P:cell differentiation"/>
    <property type="evidence" value="ECO:0007669"/>
    <property type="project" value="UniProtKB-KW"/>
</dbReference>
<dbReference type="GO" id="GO:0007283">
    <property type="term" value="P:spermatogenesis"/>
    <property type="evidence" value="ECO:0007669"/>
    <property type="project" value="UniProtKB-KW"/>
</dbReference>
<dbReference type="InterPro" id="IPR028748">
    <property type="entry name" value="CATSPERB"/>
</dbReference>
<dbReference type="InterPro" id="IPR048788">
    <property type="entry name" value="CATSPERB_2nd"/>
</dbReference>
<dbReference type="InterPro" id="IPR048789">
    <property type="entry name" value="CATSPERB_C"/>
</dbReference>
<dbReference type="InterPro" id="IPR053903">
    <property type="entry name" value="CATSPERB_head"/>
</dbReference>
<dbReference type="InterPro" id="IPR053904">
    <property type="entry name" value="CATSPERB_Ig-like"/>
</dbReference>
<dbReference type="InterPro" id="IPR048786">
    <property type="entry name" value="CATSPERB_N"/>
</dbReference>
<dbReference type="PANTHER" id="PTHR14705:SF0">
    <property type="entry name" value="CATION CHANNEL SPERM-ASSOCIATED AUXILIARY SUBUNIT BETA"/>
    <property type="match status" value="1"/>
</dbReference>
<dbReference type="PANTHER" id="PTHR14705">
    <property type="entry name" value="CATION CHANNEL SPERM-ASSOCIATED PROTEIN SUBUNIT BETA"/>
    <property type="match status" value="1"/>
</dbReference>
<dbReference type="Pfam" id="PF21541">
    <property type="entry name" value="CATSPERB_1st"/>
    <property type="match status" value="1"/>
</dbReference>
<dbReference type="Pfam" id="PF21548">
    <property type="entry name" value="CATSPERB_2nd"/>
    <property type="match status" value="1"/>
</dbReference>
<dbReference type="Pfam" id="PF15149">
    <property type="entry name" value="CATSPERB_C"/>
    <property type="match status" value="1"/>
</dbReference>
<dbReference type="Pfam" id="PF22830">
    <property type="entry name" value="CATSPERB_head"/>
    <property type="match status" value="1"/>
</dbReference>
<dbReference type="Pfam" id="PF22831">
    <property type="entry name" value="CATSPERB_Ig-like"/>
    <property type="match status" value="1"/>
</dbReference>
<feature type="chain" id="PRO_0000089953" description="Cation channel sperm-associated auxiliary subunit beta">
    <location>
        <begin position="1"/>
        <end position="1116"/>
    </location>
</feature>
<feature type="topological domain" description="Extracellular" evidence="1">
    <location>
        <begin position="1"/>
        <end position="1053"/>
    </location>
</feature>
<feature type="transmembrane region" description="Helical" evidence="1">
    <location>
        <begin position="1054"/>
        <end position="1076"/>
    </location>
</feature>
<feature type="topological domain" description="Cytoplasmic" evidence="1">
    <location>
        <begin position="1077"/>
        <end position="1116"/>
    </location>
</feature>
<feature type="glycosylation site" description="N-linked (GlcNAc...) asparagine" evidence="2">
    <location>
        <position position="90"/>
    </location>
</feature>
<feature type="glycosylation site" description="N-linked (GlcNAc...) asparagine" evidence="2">
    <location>
        <position position="100"/>
    </location>
</feature>
<feature type="glycosylation site" description="N-linked (GlcNAc...) asparagine" evidence="2">
    <location>
        <position position="118"/>
    </location>
</feature>
<feature type="glycosylation site" description="N-linked (GlcNAc...) asparagine" evidence="2">
    <location>
        <position position="226"/>
    </location>
</feature>
<feature type="glycosylation site" description="N-linked (GlcNAc...) asparagine" evidence="2">
    <location>
        <position position="321"/>
    </location>
</feature>
<feature type="glycosylation site" description="N-linked (GlcNAc...) asparagine" evidence="2">
    <location>
        <position position="618"/>
    </location>
</feature>
<feature type="glycosylation site" description="N-linked (GlcNAc...) asparagine" evidence="2">
    <location>
        <position position="690"/>
    </location>
</feature>
<feature type="glycosylation site" description="N-linked (GlcNAc...) asparagine" evidence="2">
    <location>
        <position position="913"/>
    </location>
</feature>
<feature type="glycosylation site" description="N-linked (GlcNAc...) asparagine" evidence="2">
    <location>
        <position position="921"/>
    </location>
</feature>
<feature type="glycosylation site" description="N-linked (GlcNAc...) asparagine" evidence="2">
    <location>
        <position position="1010"/>
    </location>
</feature>
<feature type="glycosylation site" description="N-linked (GlcNAc...) asparagine" evidence="2">
    <location>
        <position position="1015"/>
    </location>
</feature>
<feature type="disulfide bond" evidence="1">
    <location>
        <begin position="35"/>
        <end position="60"/>
    </location>
</feature>
<feature type="disulfide bond" evidence="1">
    <location>
        <begin position="189"/>
        <end position="302"/>
    </location>
</feature>
<feature type="disulfide bond" evidence="1">
    <location>
        <begin position="330"/>
        <end position="343"/>
    </location>
</feature>
<feature type="disulfide bond" evidence="1">
    <location>
        <begin position="718"/>
        <end position="816"/>
    </location>
</feature>
<feature type="disulfide bond" evidence="1">
    <location>
        <begin position="829"/>
        <end position="1037"/>
    </location>
</feature>
<feature type="disulfide bond" evidence="1">
    <location>
        <begin position="911"/>
        <end position="920"/>
    </location>
</feature>
<feature type="disulfide bond" evidence="1">
    <location>
        <begin position="922"/>
        <end position="937"/>
    </location>
</feature>
<feature type="splice variant" id="VSP_027008" description="In isoform 2." evidence="3">
    <location>
        <begin position="1"/>
        <end position="478"/>
    </location>
</feature>
<feature type="sequence variant" id="VAR_061634" description="In dbSNP:rs57706558.">
    <original>F</original>
    <variation>Y</variation>
    <location>
        <position position="318"/>
    </location>
</feature>
<organism>
    <name type="scientific">Homo sapiens</name>
    <name type="common">Human</name>
    <dbReference type="NCBI Taxonomy" id="9606"/>
    <lineage>
        <taxon>Eukaryota</taxon>
        <taxon>Metazoa</taxon>
        <taxon>Chordata</taxon>
        <taxon>Craniata</taxon>
        <taxon>Vertebrata</taxon>
        <taxon>Euteleostomi</taxon>
        <taxon>Mammalia</taxon>
        <taxon>Eutheria</taxon>
        <taxon>Euarchontoglires</taxon>
        <taxon>Primates</taxon>
        <taxon>Haplorrhini</taxon>
        <taxon>Catarrhini</taxon>
        <taxon>Hominidae</taxon>
        <taxon>Homo</taxon>
    </lineage>
</organism>
<gene>
    <name evidence="5" type="primary">CATSPERB</name>
    <name evidence="5" type="synonym">C14orf161</name>
</gene>